<keyword id="KW-0067">ATP-binding</keyword>
<keyword id="KW-0418">Kinase</keyword>
<keyword id="KW-0547">Nucleotide-binding</keyword>
<keyword id="KW-0597">Phosphoprotein</keyword>
<keyword id="KW-1185">Reference proteome</keyword>
<keyword id="KW-0808">Transferase</keyword>
<reference key="1">
    <citation type="journal article" date="2004" name="Genome Res.">
        <title>The status, quality, and expansion of the NIH full-length cDNA project: the Mammalian Gene Collection (MGC).</title>
        <authorList>
            <consortium name="The MGC Project Team"/>
        </authorList>
    </citation>
    <scope>NUCLEOTIDE SEQUENCE [LARGE SCALE MRNA]</scope>
    <source>
        <tissue>Salivary gland</tissue>
    </source>
</reference>
<reference key="2">
    <citation type="journal article" date="1996" name="Arch. Biochem. Biophys.">
        <title>Cloning and expression of a cDNA encoding uridine kinase from mouse brain.</title>
        <authorList>
            <person name="Ropp P.A."/>
            <person name="Traut T.W."/>
        </authorList>
    </citation>
    <scope>NUCLEOTIDE SEQUENCE [MRNA] OF 18-277</scope>
    <scope>FUNCTION</scope>
    <scope>CATALYTIC ACTIVITY</scope>
    <scope>PATHWAY</scope>
    <source>
        <tissue>Brain</tissue>
    </source>
</reference>
<reference key="3">
    <citation type="journal article" date="2010" name="Cell">
        <title>A tissue-specific atlas of mouse protein phosphorylation and expression.</title>
        <authorList>
            <person name="Huttlin E.L."/>
            <person name="Jedrychowski M.P."/>
            <person name="Elias J.E."/>
            <person name="Goswami T."/>
            <person name="Rad R."/>
            <person name="Beausoleil S.A."/>
            <person name="Villen J."/>
            <person name="Haas W."/>
            <person name="Sowa M.E."/>
            <person name="Gygi S.P."/>
        </authorList>
    </citation>
    <scope>IDENTIFICATION BY MASS SPECTROMETRY [LARGE SCALE ANALYSIS]</scope>
    <source>
        <tissue>Brain</tissue>
        <tissue>Brown adipose tissue</tissue>
        <tissue>Kidney</tissue>
    </source>
</reference>
<name>UCK1_MOUSE</name>
<comment type="function">
    <text evidence="2 4">Phosphorylates uridine and cytidine to uridine monophosphate and cytidine monophosphate (PubMed:8951040). Does not phosphorylate deoxyribonucleosides or purine ribonucleosides. Can use ATP or GTP as a phosphate donor (By similarity).</text>
</comment>
<comment type="catalytic activity">
    <reaction evidence="4">
        <text>uridine + ATP = UMP + ADP + H(+)</text>
        <dbReference type="Rhea" id="RHEA:16825"/>
        <dbReference type="ChEBI" id="CHEBI:15378"/>
        <dbReference type="ChEBI" id="CHEBI:16704"/>
        <dbReference type="ChEBI" id="CHEBI:30616"/>
        <dbReference type="ChEBI" id="CHEBI:57865"/>
        <dbReference type="ChEBI" id="CHEBI:456216"/>
        <dbReference type="EC" id="2.7.1.48"/>
    </reaction>
</comment>
<comment type="catalytic activity">
    <reaction evidence="2">
        <text>cytidine + ATP = CMP + ADP + H(+)</text>
        <dbReference type="Rhea" id="RHEA:24674"/>
        <dbReference type="ChEBI" id="CHEBI:15378"/>
        <dbReference type="ChEBI" id="CHEBI:17562"/>
        <dbReference type="ChEBI" id="CHEBI:30616"/>
        <dbReference type="ChEBI" id="CHEBI:60377"/>
        <dbReference type="ChEBI" id="CHEBI:456216"/>
        <dbReference type="EC" id="2.7.1.48"/>
    </reaction>
</comment>
<comment type="pathway">
    <text evidence="2">Pyrimidine metabolism; CTP biosynthesis via salvage pathway; CTP from cytidine: step 1/3.</text>
</comment>
<comment type="pathway">
    <text evidence="4">Pyrimidine metabolism; UMP biosynthesis via salvage pathway; UMP from uridine: step 1/1.</text>
</comment>
<comment type="similarity">
    <text evidence="5">Belongs to the uridine kinase family.</text>
</comment>
<protein>
    <recommendedName>
        <fullName>Uridine-cytidine kinase 1</fullName>
        <shortName>UCK 1</shortName>
        <ecNumber evidence="2">2.7.1.48</ecNumber>
    </recommendedName>
    <alternativeName>
        <fullName>Cytidine monophosphokinase 1</fullName>
    </alternativeName>
    <alternativeName>
        <fullName>Uridine monophosphokinase 1</fullName>
    </alternativeName>
</protein>
<gene>
    <name type="primary">Uck1</name>
    <name type="synonym">Umpk</name>
</gene>
<dbReference type="EC" id="2.7.1.48" evidence="2"/>
<dbReference type="EMBL" id="BC025146">
    <property type="protein sequence ID" value="AAH25146.1"/>
    <property type="molecule type" value="mRNA"/>
</dbReference>
<dbReference type="EMBL" id="L31783">
    <property type="protein sequence ID" value="AAB50568.1"/>
    <property type="molecule type" value="mRNA"/>
</dbReference>
<dbReference type="RefSeq" id="NP_035805.2">
    <property type="nucleotide sequence ID" value="NM_011675.2"/>
</dbReference>
<dbReference type="SMR" id="P52623"/>
<dbReference type="BioGRID" id="204440">
    <property type="interactions" value="8"/>
</dbReference>
<dbReference type="FunCoup" id="P52623">
    <property type="interactions" value="896"/>
</dbReference>
<dbReference type="IntAct" id="P52623">
    <property type="interactions" value="1"/>
</dbReference>
<dbReference type="STRING" id="10090.ENSMUSP00000002625"/>
<dbReference type="BindingDB" id="P52623"/>
<dbReference type="ChEMBL" id="CHEMBL2196"/>
<dbReference type="iPTMnet" id="P52623"/>
<dbReference type="PhosphoSitePlus" id="P52623"/>
<dbReference type="jPOST" id="P52623"/>
<dbReference type="PaxDb" id="10090-ENSMUSP00000002625"/>
<dbReference type="ProteomicsDB" id="298191"/>
<dbReference type="Pumba" id="P52623"/>
<dbReference type="DNASU" id="22245"/>
<dbReference type="GeneID" id="22245"/>
<dbReference type="KEGG" id="mmu:22245"/>
<dbReference type="AGR" id="MGI:98904"/>
<dbReference type="CTD" id="83549"/>
<dbReference type="MGI" id="MGI:98904">
    <property type="gene designation" value="Uck1"/>
</dbReference>
<dbReference type="eggNOG" id="KOG4203">
    <property type="taxonomic scope" value="Eukaryota"/>
</dbReference>
<dbReference type="InParanoid" id="P52623"/>
<dbReference type="OrthoDB" id="10257085at2759"/>
<dbReference type="Reactome" id="R-MMU-73614">
    <property type="pathway name" value="Pyrimidine salvage"/>
</dbReference>
<dbReference type="SABIO-RK" id="P52623"/>
<dbReference type="UniPathway" id="UPA00574">
    <property type="reaction ID" value="UER00637"/>
</dbReference>
<dbReference type="UniPathway" id="UPA00579">
    <property type="reaction ID" value="UER00640"/>
</dbReference>
<dbReference type="BioGRID-ORCS" id="22245">
    <property type="hits" value="4 hits in 78 CRISPR screens"/>
</dbReference>
<dbReference type="ChiTaRS" id="Uck1">
    <property type="organism name" value="mouse"/>
</dbReference>
<dbReference type="PRO" id="PR:P52623"/>
<dbReference type="Proteomes" id="UP000000589">
    <property type="component" value="Unplaced"/>
</dbReference>
<dbReference type="RNAct" id="P52623">
    <property type="molecule type" value="protein"/>
</dbReference>
<dbReference type="GO" id="GO:0005524">
    <property type="term" value="F:ATP binding"/>
    <property type="evidence" value="ECO:0007669"/>
    <property type="project" value="UniProtKB-KW"/>
</dbReference>
<dbReference type="GO" id="GO:0043771">
    <property type="term" value="F:cytidine kinase activity"/>
    <property type="evidence" value="ECO:0000250"/>
    <property type="project" value="UniProtKB"/>
</dbReference>
<dbReference type="GO" id="GO:0004849">
    <property type="term" value="F:uridine kinase activity"/>
    <property type="evidence" value="ECO:0000314"/>
    <property type="project" value="MGI"/>
</dbReference>
<dbReference type="GO" id="GO:0044211">
    <property type="term" value="P:CTP salvage"/>
    <property type="evidence" value="ECO:0000250"/>
    <property type="project" value="UniProtKB"/>
</dbReference>
<dbReference type="GO" id="GO:0044206">
    <property type="term" value="P:UMP salvage"/>
    <property type="evidence" value="ECO:0000314"/>
    <property type="project" value="MGI"/>
</dbReference>
<dbReference type="CDD" id="cd02023">
    <property type="entry name" value="UMPK"/>
    <property type="match status" value="1"/>
</dbReference>
<dbReference type="FunFam" id="3.40.50.300:FF:000297">
    <property type="entry name" value="Uridine-cytidine kinase 2"/>
    <property type="match status" value="1"/>
</dbReference>
<dbReference type="Gene3D" id="3.40.50.300">
    <property type="entry name" value="P-loop containing nucleotide triphosphate hydrolases"/>
    <property type="match status" value="1"/>
</dbReference>
<dbReference type="InterPro" id="IPR027417">
    <property type="entry name" value="P-loop_NTPase"/>
</dbReference>
<dbReference type="InterPro" id="IPR006083">
    <property type="entry name" value="PRK/URK"/>
</dbReference>
<dbReference type="InterPro" id="IPR000764">
    <property type="entry name" value="Uridine_kinase-like"/>
</dbReference>
<dbReference type="NCBIfam" id="NF004018">
    <property type="entry name" value="PRK05480.1"/>
    <property type="match status" value="1"/>
</dbReference>
<dbReference type="NCBIfam" id="TIGR00235">
    <property type="entry name" value="udk"/>
    <property type="match status" value="1"/>
</dbReference>
<dbReference type="PANTHER" id="PTHR10285">
    <property type="entry name" value="URIDINE KINASE"/>
    <property type="match status" value="1"/>
</dbReference>
<dbReference type="Pfam" id="PF00485">
    <property type="entry name" value="PRK"/>
    <property type="match status" value="1"/>
</dbReference>
<dbReference type="PRINTS" id="PR00988">
    <property type="entry name" value="URIDINKINASE"/>
</dbReference>
<dbReference type="SUPFAM" id="SSF52540">
    <property type="entry name" value="P-loop containing nucleoside triphosphate hydrolases"/>
    <property type="match status" value="1"/>
</dbReference>
<accession>P52623</accession>
<organism>
    <name type="scientific">Mus musculus</name>
    <name type="common">Mouse</name>
    <dbReference type="NCBI Taxonomy" id="10090"/>
    <lineage>
        <taxon>Eukaryota</taxon>
        <taxon>Metazoa</taxon>
        <taxon>Chordata</taxon>
        <taxon>Craniata</taxon>
        <taxon>Vertebrata</taxon>
        <taxon>Euteleostomi</taxon>
        <taxon>Mammalia</taxon>
        <taxon>Eutheria</taxon>
        <taxon>Euarchontoglires</taxon>
        <taxon>Glires</taxon>
        <taxon>Rodentia</taxon>
        <taxon>Myomorpha</taxon>
        <taxon>Muroidea</taxon>
        <taxon>Muridae</taxon>
        <taxon>Murinae</taxon>
        <taxon>Mus</taxon>
        <taxon>Mus</taxon>
    </lineage>
</organism>
<evidence type="ECO:0000250" key="1">
    <source>
        <dbReference type="UniProtKB" id="Q9BZX2"/>
    </source>
</evidence>
<evidence type="ECO:0000250" key="2">
    <source>
        <dbReference type="UniProtKB" id="Q9HA47"/>
    </source>
</evidence>
<evidence type="ECO:0000256" key="3">
    <source>
        <dbReference type="SAM" id="MobiDB-lite"/>
    </source>
</evidence>
<evidence type="ECO:0000269" key="4">
    <source>
    </source>
</evidence>
<evidence type="ECO:0000305" key="5"/>
<proteinExistence type="evidence at protein level"/>
<feature type="chain" id="PRO_0000164454" description="Uridine-cytidine kinase 1">
    <location>
        <begin position="1"/>
        <end position="277"/>
    </location>
</feature>
<feature type="region of interest" description="Disordered" evidence="3">
    <location>
        <begin position="1"/>
        <end position="30"/>
    </location>
</feature>
<feature type="region of interest" description="Disordered" evidence="3">
    <location>
        <begin position="238"/>
        <end position="277"/>
    </location>
</feature>
<feature type="compositionally biased region" description="Basic residues" evidence="3">
    <location>
        <begin position="238"/>
        <end position="250"/>
    </location>
</feature>
<feature type="compositionally biased region" description="Basic and acidic residues" evidence="3">
    <location>
        <begin position="268"/>
        <end position="277"/>
    </location>
</feature>
<feature type="binding site" evidence="2">
    <location>
        <begin position="30"/>
        <end position="38"/>
    </location>
    <ligand>
        <name>ATP</name>
        <dbReference type="ChEBI" id="CHEBI:30616"/>
    </ligand>
</feature>
<feature type="binding site" evidence="1">
    <location>
        <position position="87"/>
    </location>
    <ligand>
        <name>substrate</name>
    </ligand>
</feature>
<feature type="binding site" evidence="1">
    <location>
        <position position="115"/>
    </location>
    <ligand>
        <name>substrate</name>
    </ligand>
</feature>
<feature type="binding site" evidence="1">
    <location>
        <position position="120"/>
    </location>
    <ligand>
        <name>substrate</name>
    </ligand>
</feature>
<feature type="binding site" evidence="1">
    <location>
        <position position="169"/>
    </location>
    <ligand>
        <name>substrate</name>
    </ligand>
</feature>
<feature type="binding site" evidence="1">
    <location>
        <position position="178"/>
    </location>
    <ligand>
        <name>substrate</name>
    </ligand>
</feature>
<feature type="binding site" evidence="1">
    <location>
        <position position="186"/>
    </location>
    <ligand>
        <name>substrate</name>
    </ligand>
</feature>
<feature type="binding site" evidence="2">
    <location>
        <position position="215"/>
    </location>
    <ligand>
        <name>ATP</name>
        <dbReference type="ChEBI" id="CHEBI:30616"/>
    </ligand>
</feature>
<feature type="modified residue" description="Phosphothreonine" evidence="2">
    <location>
        <position position="251"/>
    </location>
</feature>
<sequence>MASAGGGGSESAAPEADRPQPRPFLIGVSGGTASGKSTVCEKIMELLGQNEVDRRQRKLVILSQDCFYKVLTAEQKAKALKGQYNFDHPDAFDNDLMHKTLKNIVEGKTVEVPTYDFVTHSRLPETTVVYPADVVLFEGILVFYTQEIRDMFHLRLFVDTDSDVRLSRRVLRDVQRGRDLEQILTQYTAFVKPAFEEFCLPTKKYADVIIPRGVDNMVAINLIVQHIQDILNGDLCKRHRGGPNGRNHKRTFPEPGDHPGVLATGKRSHLESSSRPH</sequence>